<evidence type="ECO:0000250" key="1"/>
<evidence type="ECO:0000255" key="2">
    <source>
        <dbReference type="HAMAP-Rule" id="MF_00103"/>
    </source>
</evidence>
<proteinExistence type="inferred from homology"/>
<comment type="function">
    <text evidence="2">Involved in base excision repair of DNA damaged by oxidation or by mutagenic agents. Acts as a DNA glycosylase that recognizes and removes damaged bases. Has a preference for oxidized purines, such as 7,8-dihydro-8-oxoguanine (8-oxoG). Has AP (apurinic/apyrimidinic) lyase activity and introduces nicks in the DNA strand. Cleaves the DNA backbone by beta-delta elimination to generate a single-strand break at the site of the removed base with both 3'- and 5'-phosphates.</text>
</comment>
<comment type="catalytic activity">
    <reaction evidence="2">
        <text>Hydrolysis of DNA containing ring-opened 7-methylguanine residues, releasing 2,6-diamino-4-hydroxy-5-(N-methyl)formamidopyrimidine.</text>
        <dbReference type="EC" id="3.2.2.23"/>
    </reaction>
</comment>
<comment type="catalytic activity">
    <reaction evidence="2">
        <text>2'-deoxyribonucleotide-(2'-deoxyribose 5'-phosphate)-2'-deoxyribonucleotide-DNA = a 3'-end 2'-deoxyribonucleotide-(2,3-dehydro-2,3-deoxyribose 5'-phosphate)-DNA + a 5'-end 5'-phospho-2'-deoxyribonucleoside-DNA + H(+)</text>
        <dbReference type="Rhea" id="RHEA:66592"/>
        <dbReference type="Rhea" id="RHEA-COMP:13180"/>
        <dbReference type="Rhea" id="RHEA-COMP:16897"/>
        <dbReference type="Rhea" id="RHEA-COMP:17067"/>
        <dbReference type="ChEBI" id="CHEBI:15378"/>
        <dbReference type="ChEBI" id="CHEBI:136412"/>
        <dbReference type="ChEBI" id="CHEBI:157695"/>
        <dbReference type="ChEBI" id="CHEBI:167181"/>
        <dbReference type="EC" id="4.2.99.18"/>
    </reaction>
</comment>
<comment type="cofactor">
    <cofactor evidence="2">
        <name>Zn(2+)</name>
        <dbReference type="ChEBI" id="CHEBI:29105"/>
    </cofactor>
    <text evidence="2">Binds 1 zinc ion per subunit.</text>
</comment>
<comment type="subunit">
    <text evidence="2">Monomer.</text>
</comment>
<comment type="similarity">
    <text evidence="2">Belongs to the FPG family.</text>
</comment>
<feature type="initiator methionine" description="Removed" evidence="1">
    <location>
        <position position="1"/>
    </location>
</feature>
<feature type="chain" id="PRO_0000170825" description="Formamidopyrimidine-DNA glycosylase">
    <location>
        <begin position="2"/>
        <end position="280"/>
    </location>
</feature>
<feature type="zinc finger region" description="FPG-type" evidence="2">
    <location>
        <begin position="239"/>
        <end position="273"/>
    </location>
</feature>
<feature type="active site" description="Schiff-base intermediate with DNA" evidence="2">
    <location>
        <position position="2"/>
    </location>
</feature>
<feature type="active site" description="Proton donor" evidence="2">
    <location>
        <position position="3"/>
    </location>
</feature>
<feature type="active site" description="Proton donor; for beta-elimination activity" evidence="2">
    <location>
        <position position="59"/>
    </location>
</feature>
<feature type="active site" description="Proton donor; for delta-elimination activity" evidence="2">
    <location>
        <position position="263"/>
    </location>
</feature>
<feature type="binding site" evidence="2">
    <location>
        <position position="92"/>
    </location>
    <ligand>
        <name>DNA</name>
        <dbReference type="ChEBI" id="CHEBI:16991"/>
    </ligand>
</feature>
<feature type="binding site" evidence="2">
    <location>
        <position position="111"/>
    </location>
    <ligand>
        <name>DNA</name>
        <dbReference type="ChEBI" id="CHEBI:16991"/>
    </ligand>
</feature>
<dbReference type="EC" id="3.2.2.23" evidence="2"/>
<dbReference type="EC" id="4.2.99.18" evidence="2"/>
<dbReference type="EMBL" id="AE016830">
    <property type="protein sequence ID" value="AAO80688.1"/>
    <property type="molecule type" value="Genomic_DNA"/>
</dbReference>
<dbReference type="RefSeq" id="NP_814618.1">
    <property type="nucleotide sequence ID" value="NC_004668.1"/>
</dbReference>
<dbReference type="RefSeq" id="WP_002355756.1">
    <property type="nucleotide sequence ID" value="NZ_KE136527.1"/>
</dbReference>
<dbReference type="SMR" id="Q837G3"/>
<dbReference type="STRING" id="226185.EF_0879"/>
<dbReference type="EnsemblBacteria" id="AAO80688">
    <property type="protein sequence ID" value="AAO80688"/>
    <property type="gene ID" value="EF_0879"/>
</dbReference>
<dbReference type="GeneID" id="60893218"/>
<dbReference type="KEGG" id="efa:EF0879"/>
<dbReference type="PATRIC" id="fig|226185.45.peg.3088"/>
<dbReference type="eggNOG" id="COG0266">
    <property type="taxonomic scope" value="Bacteria"/>
</dbReference>
<dbReference type="HOGENOM" id="CLU_038423_1_2_9"/>
<dbReference type="Proteomes" id="UP000001415">
    <property type="component" value="Chromosome"/>
</dbReference>
<dbReference type="GO" id="GO:0034039">
    <property type="term" value="F:8-oxo-7,8-dihydroguanine DNA N-glycosylase activity"/>
    <property type="evidence" value="ECO:0007669"/>
    <property type="project" value="TreeGrafter"/>
</dbReference>
<dbReference type="GO" id="GO:0140078">
    <property type="term" value="F:class I DNA-(apurinic or apyrimidinic site) endonuclease activity"/>
    <property type="evidence" value="ECO:0007669"/>
    <property type="project" value="UniProtKB-EC"/>
</dbReference>
<dbReference type="GO" id="GO:0003684">
    <property type="term" value="F:damaged DNA binding"/>
    <property type="evidence" value="ECO:0007669"/>
    <property type="project" value="InterPro"/>
</dbReference>
<dbReference type="GO" id="GO:0008270">
    <property type="term" value="F:zinc ion binding"/>
    <property type="evidence" value="ECO:0007669"/>
    <property type="project" value="UniProtKB-UniRule"/>
</dbReference>
<dbReference type="GO" id="GO:0006284">
    <property type="term" value="P:base-excision repair"/>
    <property type="evidence" value="ECO:0007669"/>
    <property type="project" value="InterPro"/>
</dbReference>
<dbReference type="CDD" id="cd08966">
    <property type="entry name" value="EcFpg-like_N"/>
    <property type="match status" value="1"/>
</dbReference>
<dbReference type="FunFam" id="1.10.8.50:FF:000003">
    <property type="entry name" value="Formamidopyrimidine-DNA glycosylase"/>
    <property type="match status" value="1"/>
</dbReference>
<dbReference type="FunFam" id="3.20.190.10:FF:000001">
    <property type="entry name" value="Formamidopyrimidine-DNA glycosylase"/>
    <property type="match status" value="1"/>
</dbReference>
<dbReference type="Gene3D" id="1.10.8.50">
    <property type="match status" value="1"/>
</dbReference>
<dbReference type="Gene3D" id="3.20.190.10">
    <property type="entry name" value="MutM-like, N-terminal"/>
    <property type="match status" value="1"/>
</dbReference>
<dbReference type="HAMAP" id="MF_00103">
    <property type="entry name" value="Fapy_DNA_glycosyl"/>
    <property type="match status" value="1"/>
</dbReference>
<dbReference type="InterPro" id="IPR015886">
    <property type="entry name" value="DNA_glyclase/AP_lyase_DNA-bd"/>
</dbReference>
<dbReference type="InterPro" id="IPR015887">
    <property type="entry name" value="DNA_glyclase_Znf_dom_DNA_BS"/>
</dbReference>
<dbReference type="InterPro" id="IPR020629">
    <property type="entry name" value="Formamido-pyr_DNA_Glyclase"/>
</dbReference>
<dbReference type="InterPro" id="IPR012319">
    <property type="entry name" value="FPG_cat"/>
</dbReference>
<dbReference type="InterPro" id="IPR035937">
    <property type="entry name" value="MutM-like_N-ter"/>
</dbReference>
<dbReference type="InterPro" id="IPR010979">
    <property type="entry name" value="Ribosomal_uS13-like_H2TH"/>
</dbReference>
<dbReference type="InterPro" id="IPR000214">
    <property type="entry name" value="Znf_DNA_glyclase/AP_lyase"/>
</dbReference>
<dbReference type="InterPro" id="IPR010663">
    <property type="entry name" value="Znf_FPG/IleRS"/>
</dbReference>
<dbReference type="NCBIfam" id="TIGR00577">
    <property type="entry name" value="fpg"/>
    <property type="match status" value="1"/>
</dbReference>
<dbReference type="NCBIfam" id="NF002211">
    <property type="entry name" value="PRK01103.1"/>
    <property type="match status" value="1"/>
</dbReference>
<dbReference type="PANTHER" id="PTHR22993">
    <property type="entry name" value="FORMAMIDOPYRIMIDINE-DNA GLYCOSYLASE"/>
    <property type="match status" value="1"/>
</dbReference>
<dbReference type="PANTHER" id="PTHR22993:SF9">
    <property type="entry name" value="FORMAMIDOPYRIMIDINE-DNA GLYCOSYLASE"/>
    <property type="match status" value="1"/>
</dbReference>
<dbReference type="Pfam" id="PF01149">
    <property type="entry name" value="Fapy_DNA_glyco"/>
    <property type="match status" value="1"/>
</dbReference>
<dbReference type="Pfam" id="PF06831">
    <property type="entry name" value="H2TH"/>
    <property type="match status" value="1"/>
</dbReference>
<dbReference type="Pfam" id="PF06827">
    <property type="entry name" value="zf-FPG_IleRS"/>
    <property type="match status" value="1"/>
</dbReference>
<dbReference type="SMART" id="SM00898">
    <property type="entry name" value="Fapy_DNA_glyco"/>
    <property type="match status" value="1"/>
</dbReference>
<dbReference type="SMART" id="SM01232">
    <property type="entry name" value="H2TH"/>
    <property type="match status" value="1"/>
</dbReference>
<dbReference type="SUPFAM" id="SSF57716">
    <property type="entry name" value="Glucocorticoid receptor-like (DNA-binding domain)"/>
    <property type="match status" value="1"/>
</dbReference>
<dbReference type="SUPFAM" id="SSF81624">
    <property type="entry name" value="N-terminal domain of MutM-like DNA repair proteins"/>
    <property type="match status" value="1"/>
</dbReference>
<dbReference type="SUPFAM" id="SSF46946">
    <property type="entry name" value="S13-like H2TH domain"/>
    <property type="match status" value="1"/>
</dbReference>
<dbReference type="PROSITE" id="PS51068">
    <property type="entry name" value="FPG_CAT"/>
    <property type="match status" value="1"/>
</dbReference>
<dbReference type="PROSITE" id="PS01242">
    <property type="entry name" value="ZF_FPG_1"/>
    <property type="match status" value="1"/>
</dbReference>
<dbReference type="PROSITE" id="PS51066">
    <property type="entry name" value="ZF_FPG_2"/>
    <property type="match status" value="1"/>
</dbReference>
<sequence>MPELPEVETVRKGLEKLVVGKTIQEVIVFWPRIIESPEVDVFQGQLAGQTIEGIERRGKFLIFKLSDNDMISHLRMEGKYEFHQADDEIAKHTHVMFTFTDGTQLRYLDVRKFGRMTLVPKNQGHQYKGILALGPEPTPDVFQLATFQQGLKKHHKAIKPLLLDQKLVTGLGNIYVDEALWQAQIHPEQPADSLKPAEVATLYQAIIDVLARAVEAGGTTIRTYLNALGEAGTFQVALNVYGQTGLPCNRCGTPIVKTKVAQRGTHYCPQCQQLKGRRLK</sequence>
<protein>
    <recommendedName>
        <fullName evidence="2">Formamidopyrimidine-DNA glycosylase</fullName>
        <shortName evidence="2">Fapy-DNA glycosylase</shortName>
        <ecNumber evidence="2">3.2.2.23</ecNumber>
    </recommendedName>
    <alternativeName>
        <fullName evidence="2">DNA-(apurinic or apyrimidinic site) lyase MutM</fullName>
        <shortName evidence="2">AP lyase MutM</shortName>
        <ecNumber evidence="2">4.2.99.18</ecNumber>
    </alternativeName>
</protein>
<accession>Q837G3</accession>
<keyword id="KW-0227">DNA damage</keyword>
<keyword id="KW-0234">DNA repair</keyword>
<keyword id="KW-0238">DNA-binding</keyword>
<keyword id="KW-0326">Glycosidase</keyword>
<keyword id="KW-0378">Hydrolase</keyword>
<keyword id="KW-0456">Lyase</keyword>
<keyword id="KW-0479">Metal-binding</keyword>
<keyword id="KW-0511">Multifunctional enzyme</keyword>
<keyword id="KW-1185">Reference proteome</keyword>
<keyword id="KW-0862">Zinc</keyword>
<keyword id="KW-0863">Zinc-finger</keyword>
<reference key="1">
    <citation type="journal article" date="2003" name="Science">
        <title>Role of mobile DNA in the evolution of vancomycin-resistant Enterococcus faecalis.</title>
        <authorList>
            <person name="Paulsen I.T."/>
            <person name="Banerjei L."/>
            <person name="Myers G.S.A."/>
            <person name="Nelson K.E."/>
            <person name="Seshadri R."/>
            <person name="Read T.D."/>
            <person name="Fouts D.E."/>
            <person name="Eisen J.A."/>
            <person name="Gill S.R."/>
            <person name="Heidelberg J.F."/>
            <person name="Tettelin H."/>
            <person name="Dodson R.J."/>
            <person name="Umayam L.A."/>
            <person name="Brinkac L.M."/>
            <person name="Beanan M.J."/>
            <person name="Daugherty S.C."/>
            <person name="DeBoy R.T."/>
            <person name="Durkin S.A."/>
            <person name="Kolonay J.F."/>
            <person name="Madupu R."/>
            <person name="Nelson W.C."/>
            <person name="Vamathevan J.J."/>
            <person name="Tran B."/>
            <person name="Upton J."/>
            <person name="Hansen T."/>
            <person name="Shetty J."/>
            <person name="Khouri H.M."/>
            <person name="Utterback T.R."/>
            <person name="Radune D."/>
            <person name="Ketchum K.A."/>
            <person name="Dougherty B.A."/>
            <person name="Fraser C.M."/>
        </authorList>
    </citation>
    <scope>NUCLEOTIDE SEQUENCE [LARGE SCALE GENOMIC DNA]</scope>
    <source>
        <strain>ATCC 700802 / V583</strain>
    </source>
</reference>
<organism>
    <name type="scientific">Enterococcus faecalis (strain ATCC 700802 / V583)</name>
    <dbReference type="NCBI Taxonomy" id="226185"/>
    <lineage>
        <taxon>Bacteria</taxon>
        <taxon>Bacillati</taxon>
        <taxon>Bacillota</taxon>
        <taxon>Bacilli</taxon>
        <taxon>Lactobacillales</taxon>
        <taxon>Enterococcaceae</taxon>
        <taxon>Enterococcus</taxon>
    </lineage>
</organism>
<name>FPG_ENTFA</name>
<gene>
    <name evidence="2" type="primary">mutM</name>
    <name evidence="2" type="synonym">fpg</name>
    <name type="ordered locus">EF_0879</name>
</gene>